<organism>
    <name type="scientific">Cavia porcellus</name>
    <name type="common">Guinea pig</name>
    <dbReference type="NCBI Taxonomy" id="10141"/>
    <lineage>
        <taxon>Eukaryota</taxon>
        <taxon>Metazoa</taxon>
        <taxon>Chordata</taxon>
        <taxon>Craniata</taxon>
        <taxon>Vertebrata</taxon>
        <taxon>Euteleostomi</taxon>
        <taxon>Mammalia</taxon>
        <taxon>Eutheria</taxon>
        <taxon>Euarchontoglires</taxon>
        <taxon>Glires</taxon>
        <taxon>Rodentia</taxon>
        <taxon>Hystricomorpha</taxon>
        <taxon>Caviidae</taxon>
        <taxon>Cavia</taxon>
    </lineage>
</organism>
<feature type="signal peptide" evidence="2">
    <location>
        <begin position="1"/>
        <end position="15"/>
    </location>
</feature>
<feature type="chain" id="PRO_0000014586" description="T-cell surface glycoprotein CD1b4">
    <location>
        <begin position="16"/>
        <end position="330"/>
    </location>
</feature>
<feature type="topological domain" description="Extracellular" evidence="2">
    <location>
        <begin position="16"/>
        <end position="299"/>
    </location>
</feature>
<feature type="transmembrane region" description="Helical" evidence="2">
    <location>
        <begin position="300"/>
        <end position="320"/>
    </location>
</feature>
<feature type="topological domain" description="Cytoplasmic" evidence="2">
    <location>
        <begin position="321"/>
        <end position="330"/>
    </location>
</feature>
<feature type="domain" description="Ig-like">
    <location>
        <begin position="182"/>
        <end position="292"/>
    </location>
</feature>
<feature type="short sequence motif" description="Internalization signal" evidence="1">
    <location>
        <begin position="326"/>
        <end position="329"/>
    </location>
</feature>
<feature type="glycosylation site" description="N-linked (GlcNAc...) asparagine" evidence="2">
    <location>
        <position position="35"/>
    </location>
</feature>
<feature type="glycosylation site" description="N-linked (GlcNAc...) asparagine" evidence="2">
    <location>
        <position position="72"/>
    </location>
</feature>
<feature type="glycosylation site" description="N-linked (GlcNAc...) asparagine" evidence="2">
    <location>
        <position position="143"/>
    </location>
</feature>
<feature type="disulfide bond" evidence="3">
    <location>
        <begin position="117"/>
        <end position="181"/>
    </location>
</feature>
<feature type="disulfide bond" evidence="3">
    <location>
        <begin position="221"/>
        <end position="276"/>
    </location>
</feature>
<name>CD1B4_CAVPO</name>
<gene>
    <name type="primary">CD1B4</name>
</gene>
<evidence type="ECO:0000250" key="1"/>
<evidence type="ECO:0000255" key="2"/>
<evidence type="ECO:0000255" key="3">
    <source>
        <dbReference type="PROSITE-ProRule" id="PRU00114"/>
    </source>
</evidence>
<dbReference type="EMBL" id="AF145486">
    <property type="protein sequence ID" value="AAF12741.1"/>
    <property type="molecule type" value="mRNA"/>
</dbReference>
<dbReference type="RefSeq" id="NP_001166323.1">
    <property type="nucleotide sequence ID" value="NM_001172852.1"/>
</dbReference>
<dbReference type="SMR" id="Q9QZY9"/>
<dbReference type="STRING" id="10141.ENSCPOP00000016680"/>
<dbReference type="GlyCosmos" id="Q9QZY9">
    <property type="glycosylation" value="3 sites, No reported glycans"/>
</dbReference>
<dbReference type="GeneID" id="100379552"/>
<dbReference type="KEGG" id="cpoc:100379552"/>
<dbReference type="CTD" id="100379552"/>
<dbReference type="eggNOG" id="ENOG502SJH6">
    <property type="taxonomic scope" value="Eukaryota"/>
</dbReference>
<dbReference type="InParanoid" id="Q9QZY9"/>
<dbReference type="OrthoDB" id="8890485at2759"/>
<dbReference type="Proteomes" id="UP000005447">
    <property type="component" value="Unassembled WGS sequence"/>
</dbReference>
<dbReference type="GO" id="GO:0010008">
    <property type="term" value="C:endosome membrane"/>
    <property type="evidence" value="ECO:0007669"/>
    <property type="project" value="UniProtKB-SubCell"/>
</dbReference>
<dbReference type="GO" id="GO:0009897">
    <property type="term" value="C:external side of plasma membrane"/>
    <property type="evidence" value="ECO:0007669"/>
    <property type="project" value="TreeGrafter"/>
</dbReference>
<dbReference type="GO" id="GO:0005615">
    <property type="term" value="C:extracellular space"/>
    <property type="evidence" value="ECO:0007669"/>
    <property type="project" value="TreeGrafter"/>
</dbReference>
<dbReference type="GO" id="GO:0005765">
    <property type="term" value="C:lysosomal membrane"/>
    <property type="evidence" value="ECO:0007669"/>
    <property type="project" value="UniProtKB-SubCell"/>
</dbReference>
<dbReference type="GO" id="GO:0030883">
    <property type="term" value="F:endogenous lipid antigen binding"/>
    <property type="evidence" value="ECO:0007669"/>
    <property type="project" value="TreeGrafter"/>
</dbReference>
<dbReference type="GO" id="GO:0030884">
    <property type="term" value="F:exogenous lipid antigen binding"/>
    <property type="evidence" value="ECO:0007669"/>
    <property type="project" value="TreeGrafter"/>
</dbReference>
<dbReference type="GO" id="GO:0071723">
    <property type="term" value="F:lipopeptide binding"/>
    <property type="evidence" value="ECO:0007669"/>
    <property type="project" value="TreeGrafter"/>
</dbReference>
<dbReference type="GO" id="GO:0002250">
    <property type="term" value="P:adaptive immune response"/>
    <property type="evidence" value="ECO:0007669"/>
    <property type="project" value="UniProtKB-KW"/>
</dbReference>
<dbReference type="GO" id="GO:0048006">
    <property type="term" value="P:antigen processing and presentation, endogenous lipid antigen via MHC class Ib"/>
    <property type="evidence" value="ECO:0007669"/>
    <property type="project" value="TreeGrafter"/>
</dbReference>
<dbReference type="GO" id="GO:0048007">
    <property type="term" value="P:antigen processing and presentation, exogenous lipid antigen via MHC class Ib"/>
    <property type="evidence" value="ECO:0007669"/>
    <property type="project" value="TreeGrafter"/>
</dbReference>
<dbReference type="GO" id="GO:0001916">
    <property type="term" value="P:positive regulation of T cell mediated cytotoxicity"/>
    <property type="evidence" value="ECO:0007669"/>
    <property type="project" value="TreeGrafter"/>
</dbReference>
<dbReference type="CDD" id="cd21029">
    <property type="entry name" value="IgC1_CD1"/>
    <property type="match status" value="1"/>
</dbReference>
<dbReference type="FunFam" id="2.60.40.10:FF:000254">
    <property type="entry name" value="Antigen-presenting glycoprotein CD1d1"/>
    <property type="match status" value="1"/>
</dbReference>
<dbReference type="Gene3D" id="2.60.40.10">
    <property type="entry name" value="Immunoglobulins"/>
    <property type="match status" value="1"/>
</dbReference>
<dbReference type="Gene3D" id="3.30.500.10">
    <property type="entry name" value="MHC class I-like antigen recognition-like"/>
    <property type="match status" value="1"/>
</dbReference>
<dbReference type="InterPro" id="IPR007110">
    <property type="entry name" value="Ig-like_dom"/>
</dbReference>
<dbReference type="InterPro" id="IPR036179">
    <property type="entry name" value="Ig-like_dom_sf"/>
</dbReference>
<dbReference type="InterPro" id="IPR013783">
    <property type="entry name" value="Ig-like_fold"/>
</dbReference>
<dbReference type="InterPro" id="IPR003597">
    <property type="entry name" value="Ig_C1-set"/>
</dbReference>
<dbReference type="InterPro" id="IPR050208">
    <property type="entry name" value="MHC_class-I_related"/>
</dbReference>
<dbReference type="InterPro" id="IPR011161">
    <property type="entry name" value="MHC_I-like_Ag-recog"/>
</dbReference>
<dbReference type="InterPro" id="IPR037055">
    <property type="entry name" value="MHC_I-like_Ag-recog_sf"/>
</dbReference>
<dbReference type="InterPro" id="IPR011162">
    <property type="entry name" value="MHC_I/II-like_Ag-recog"/>
</dbReference>
<dbReference type="PANTHER" id="PTHR16675">
    <property type="entry name" value="MHC CLASS I-RELATED"/>
    <property type="match status" value="1"/>
</dbReference>
<dbReference type="PANTHER" id="PTHR16675:SF130">
    <property type="entry name" value="T-CELL SURFACE GLYCOPROTEIN CD1B"/>
    <property type="match status" value="1"/>
</dbReference>
<dbReference type="Pfam" id="PF07654">
    <property type="entry name" value="C1-set"/>
    <property type="match status" value="1"/>
</dbReference>
<dbReference type="Pfam" id="PF16497">
    <property type="entry name" value="MHC_I_3"/>
    <property type="match status" value="1"/>
</dbReference>
<dbReference type="SMART" id="SM00407">
    <property type="entry name" value="IGc1"/>
    <property type="match status" value="1"/>
</dbReference>
<dbReference type="SUPFAM" id="SSF48726">
    <property type="entry name" value="Immunoglobulin"/>
    <property type="match status" value="1"/>
</dbReference>
<dbReference type="SUPFAM" id="SSF54452">
    <property type="entry name" value="MHC antigen-recognition domain"/>
    <property type="match status" value="1"/>
</dbReference>
<dbReference type="PROSITE" id="PS50835">
    <property type="entry name" value="IG_LIKE"/>
    <property type="match status" value="1"/>
</dbReference>
<comment type="function">
    <text evidence="1">Antigen-presenting protein that binds self and non-self lipid and glycolipid antigens and presents them to T-cell receptors on natural killer T-cells.</text>
</comment>
<comment type="subunit">
    <text evidence="1">Heterodimer with B2M (beta-2-microglobulin). Interacts with saposin C (By similarity).</text>
</comment>
<comment type="subcellular location">
    <subcellularLocation>
        <location evidence="1">Cell membrane</location>
        <topology evidence="1">Single-pass type I membrane protein</topology>
    </subcellularLocation>
    <subcellularLocation>
        <location evidence="1">Endosome membrane</location>
    </subcellularLocation>
    <subcellularLocation>
        <location evidence="1">Lysosome membrane</location>
    </subcellularLocation>
    <text evidence="1">Subject to intracellular trafficking between the cell membrane, endosomes and lysosomes. Localizes to cell surface lipid rafts (By similarity).</text>
</comment>
<comment type="miscellaneous">
    <text evidence="1">During protein synthesis and maturation, CD1 family members bind endogenous lipids that are replaced by lipid or glycolipid antigens when the proteins are internalized and pass through endosomes or lysosomes, before trafficking back to the cell surface. Interaction with saposin C is required for the loading of bacterial lipid antigens onto CD1B in the lysosome (By similarity).</text>
</comment>
<reference key="1">
    <citation type="journal article" date="1999" name="J. Immunol.">
        <title>Conservation of a CD1 multigene family in the guinea pig.</title>
        <authorList>
            <person name="Dascher C.C."/>
            <person name="Hiromatsu K."/>
            <person name="Naylor J.W."/>
            <person name="Brauer P.P."/>
            <person name="Brown K.A."/>
            <person name="Storey J.R."/>
            <person name="Behar S.M."/>
            <person name="Kawasaki E.S."/>
            <person name="Porcelli S.A."/>
            <person name="Brenner M.B."/>
            <person name="LeClair K.P."/>
        </authorList>
    </citation>
    <scope>NUCLEOTIDE SEQUENCE [MRNA]</scope>
    <source>
        <strain>Hartley</strain>
        <strain>NIH 2</strain>
        <tissue>Thymus</tissue>
    </source>
</reference>
<sequence>MLLLALAFFFPAGDTQNVLPGKISFYGIQISTFFNHTVVENRGSGWLGDMEISSWDSEKETIIFRKPWSKGNFSNDEILEVEEIFQVYFFGFVREAQKHMSDFQVEYPFEIQVISGCEVNSHRSFDYFMRVAVKGLDLLSIKNHSCWPAPEGVSRAQEIWTLILQYKRICDTVEILLTKTCPRYLMSVIEAGKSDLQKQVKPDAWLSQGPSPGPGLLQLVCHVSGFYPKPVWVMWMRGDKELPETQKRDVLPNADETWYLRVTLDVAAEEAAGLSCRVKHSSLEGQDIILYWGHSISIGWIILAVLVPCLIVLVLFILWFYRRWSYEDIF</sequence>
<protein>
    <recommendedName>
        <fullName>T-cell surface glycoprotein CD1b4</fullName>
    </recommendedName>
    <cdAntigenName>CD1b-4</cdAntigenName>
</protein>
<keyword id="KW-1064">Adaptive immunity</keyword>
<keyword id="KW-1003">Cell membrane</keyword>
<keyword id="KW-1015">Disulfide bond</keyword>
<keyword id="KW-0967">Endosome</keyword>
<keyword id="KW-0325">Glycoprotein</keyword>
<keyword id="KW-0391">Immunity</keyword>
<keyword id="KW-0393">Immunoglobulin domain</keyword>
<keyword id="KW-0458">Lysosome</keyword>
<keyword id="KW-0472">Membrane</keyword>
<keyword id="KW-1185">Reference proteome</keyword>
<keyword id="KW-0732">Signal</keyword>
<keyword id="KW-0812">Transmembrane</keyword>
<keyword id="KW-1133">Transmembrane helix</keyword>
<accession>Q9QZY9</accession>
<proteinExistence type="evidence at transcript level"/>